<dbReference type="EMBL" id="AB033767">
    <property type="protein sequence ID" value="BAB11885.1"/>
    <property type="status" value="ALT_INIT"/>
    <property type="molecule type" value="mRNA"/>
</dbReference>
<dbReference type="EMBL" id="AK291129">
    <property type="protein sequence ID" value="BAF83818.1"/>
    <property type="molecule type" value="mRNA"/>
</dbReference>
<dbReference type="EMBL" id="AK301959">
    <property type="protein sequence ID" value="BAG63373.1"/>
    <property type="molecule type" value="mRNA"/>
</dbReference>
<dbReference type="EMBL" id="AL035661">
    <property type="status" value="NOT_ANNOTATED_CDS"/>
    <property type="molecule type" value="Genomic_DNA"/>
</dbReference>
<dbReference type="EMBL" id="BC003501">
    <property type="protein sequence ID" value="AAH03501.1"/>
    <property type="molecule type" value="mRNA"/>
</dbReference>
<dbReference type="EMBL" id="AY359076">
    <property type="protein sequence ID" value="AAQ89435.1"/>
    <property type="status" value="ALT_INIT"/>
    <property type="molecule type" value="mRNA"/>
</dbReference>
<dbReference type="EMBL" id="AK025834">
    <property type="protein sequence ID" value="BAB15253.1"/>
    <property type="status" value="ALT_INIT"/>
    <property type="molecule type" value="mRNA"/>
</dbReference>
<dbReference type="EMBL" id="AK026866">
    <property type="protein sequence ID" value="BAB15578.1"/>
    <property type="status" value="ALT_INIT"/>
    <property type="molecule type" value="mRNA"/>
</dbReference>
<dbReference type="CCDS" id="CCDS13166.1">
    <molecule id="Q9HDC9-1"/>
</dbReference>
<dbReference type="RefSeq" id="NP_065392.1">
    <molecule id="Q9HDC9-1"/>
    <property type="nucleotide sequence ID" value="NM_020531.3"/>
</dbReference>
<dbReference type="RefSeq" id="XP_005260820.1">
    <molecule id="Q9HDC9-2"/>
    <property type="nucleotide sequence ID" value="XM_005260763.4"/>
</dbReference>
<dbReference type="RefSeq" id="XP_054179700.1">
    <molecule id="Q9HDC9-2"/>
    <property type="nucleotide sequence ID" value="XM_054323725.1"/>
</dbReference>
<dbReference type="SMR" id="Q9HDC9"/>
<dbReference type="BioGRID" id="121397">
    <property type="interactions" value="77"/>
</dbReference>
<dbReference type="FunCoup" id="Q9HDC9">
    <property type="interactions" value="613"/>
</dbReference>
<dbReference type="IntAct" id="Q9HDC9">
    <property type="interactions" value="55"/>
</dbReference>
<dbReference type="MINT" id="Q9HDC9"/>
<dbReference type="STRING" id="9606.ENSP00000217456"/>
<dbReference type="GlyConnect" id="797">
    <property type="glycosylation" value="38 N-Linked glycans (2 sites)"/>
</dbReference>
<dbReference type="GlyCosmos" id="Q9HDC9">
    <property type="glycosylation" value="3 sites, 43 glycans"/>
</dbReference>
<dbReference type="GlyGen" id="Q9HDC9">
    <property type="glycosylation" value="6 sites, 59 N-linked glycans (2 sites), 1 O-linked glycan (4 sites)"/>
</dbReference>
<dbReference type="iPTMnet" id="Q9HDC9"/>
<dbReference type="MetOSite" id="Q9HDC9"/>
<dbReference type="PhosphoSitePlus" id="Q9HDC9"/>
<dbReference type="SwissPalm" id="Q9HDC9"/>
<dbReference type="BioMuta" id="APMAP"/>
<dbReference type="DMDM" id="24211474"/>
<dbReference type="CPTAC" id="CPTAC-1280"/>
<dbReference type="CPTAC" id="CPTAC-648"/>
<dbReference type="jPOST" id="Q9HDC9"/>
<dbReference type="MassIVE" id="Q9HDC9"/>
<dbReference type="PaxDb" id="9606-ENSP00000217456"/>
<dbReference type="PeptideAtlas" id="Q9HDC9"/>
<dbReference type="PRIDE" id="Q9HDC9"/>
<dbReference type="ProteomicsDB" id="81851">
    <molecule id="Q9HDC9-1"/>
</dbReference>
<dbReference type="ProteomicsDB" id="81852">
    <molecule id="Q9HDC9-2"/>
</dbReference>
<dbReference type="Pumba" id="Q9HDC9"/>
<dbReference type="Antibodypedia" id="2012">
    <property type="antibodies" value="304 antibodies from 22 providers"/>
</dbReference>
<dbReference type="DNASU" id="57136"/>
<dbReference type="Ensembl" id="ENST00000217456.3">
    <molecule id="Q9HDC9-1"/>
    <property type="protein sequence ID" value="ENSP00000217456.2"/>
    <property type="gene ID" value="ENSG00000101474.12"/>
</dbReference>
<dbReference type="GeneID" id="57136"/>
<dbReference type="KEGG" id="hsa:57136"/>
<dbReference type="MANE-Select" id="ENST00000217456.3">
    <property type="protein sequence ID" value="ENSP00000217456.2"/>
    <property type="RefSeq nucleotide sequence ID" value="NM_020531.3"/>
    <property type="RefSeq protein sequence ID" value="NP_065392.1"/>
</dbReference>
<dbReference type="UCSC" id="uc002wty.4">
    <molecule id="Q9HDC9-1"/>
    <property type="organism name" value="human"/>
</dbReference>
<dbReference type="AGR" id="HGNC:13238"/>
<dbReference type="CTD" id="57136"/>
<dbReference type="DisGeNET" id="57136"/>
<dbReference type="GeneCards" id="APMAP"/>
<dbReference type="HGNC" id="HGNC:13238">
    <property type="gene designation" value="APMAP"/>
</dbReference>
<dbReference type="HPA" id="ENSG00000101474">
    <property type="expression patterns" value="Tissue enhanced (liver)"/>
</dbReference>
<dbReference type="MIM" id="615884">
    <property type="type" value="gene"/>
</dbReference>
<dbReference type="neXtProt" id="NX_Q9HDC9"/>
<dbReference type="OpenTargets" id="ENSG00000101474"/>
<dbReference type="PharmGKB" id="PA25745"/>
<dbReference type="VEuPathDB" id="HostDB:ENSG00000101474"/>
<dbReference type="eggNOG" id="KOG1520">
    <property type="taxonomic scope" value="Eukaryota"/>
</dbReference>
<dbReference type="GeneTree" id="ENSGT00440000039984"/>
<dbReference type="HOGENOM" id="CLU_023267_0_0_1"/>
<dbReference type="InParanoid" id="Q9HDC9"/>
<dbReference type="OMA" id="CCRTRAQ"/>
<dbReference type="OrthoDB" id="5307922at2759"/>
<dbReference type="PAN-GO" id="Q9HDC9">
    <property type="GO annotations" value="0 GO annotations based on evolutionary models"/>
</dbReference>
<dbReference type="PhylomeDB" id="Q9HDC9"/>
<dbReference type="TreeFam" id="TF316475"/>
<dbReference type="PathwayCommons" id="Q9HDC9"/>
<dbReference type="SignaLink" id="Q9HDC9"/>
<dbReference type="BioGRID-ORCS" id="57136">
    <property type="hits" value="10 hits in 1157 CRISPR screens"/>
</dbReference>
<dbReference type="ChiTaRS" id="APMAP">
    <property type="organism name" value="human"/>
</dbReference>
<dbReference type="GeneWiki" id="C20orf3"/>
<dbReference type="GenomeRNAi" id="57136"/>
<dbReference type="Pharos" id="Q9HDC9">
    <property type="development level" value="Tbio"/>
</dbReference>
<dbReference type="PRO" id="PR:Q9HDC9"/>
<dbReference type="Proteomes" id="UP000005640">
    <property type="component" value="Chromosome 20"/>
</dbReference>
<dbReference type="RNAct" id="Q9HDC9">
    <property type="molecule type" value="protein"/>
</dbReference>
<dbReference type="Bgee" id="ENSG00000101474">
    <property type="expression patterns" value="Expressed in cerebellar vermis and 203 other cell types or tissues"/>
</dbReference>
<dbReference type="ExpressionAtlas" id="Q9HDC9">
    <property type="expression patterns" value="baseline and differential"/>
</dbReference>
<dbReference type="GO" id="GO:0009986">
    <property type="term" value="C:cell surface"/>
    <property type="evidence" value="ECO:0000314"/>
    <property type="project" value="UniProtKB"/>
</dbReference>
<dbReference type="GO" id="GO:0016020">
    <property type="term" value="C:membrane"/>
    <property type="evidence" value="ECO:0000314"/>
    <property type="project" value="UniProtKB"/>
</dbReference>
<dbReference type="GO" id="GO:0004064">
    <property type="term" value="F:arylesterase activity"/>
    <property type="evidence" value="ECO:0000314"/>
    <property type="project" value="UniProtKB"/>
</dbReference>
<dbReference type="FunFam" id="2.120.10.30:FF:000041">
    <property type="entry name" value="adipocyte plasma membrane-associated protein"/>
    <property type="match status" value="1"/>
</dbReference>
<dbReference type="Gene3D" id="2.120.10.30">
    <property type="entry name" value="TolB, C-terminal domain"/>
    <property type="match status" value="1"/>
</dbReference>
<dbReference type="InterPro" id="IPR011042">
    <property type="entry name" value="6-blade_b-propeller_TolB-like"/>
</dbReference>
<dbReference type="InterPro" id="IPR018119">
    <property type="entry name" value="Strictosidine_synth_cons-reg"/>
</dbReference>
<dbReference type="PANTHER" id="PTHR10426:SF130">
    <property type="entry name" value="ADIPOCYTE PLASMA MEMBRANE-ASSOCIATED PROTEIN"/>
    <property type="match status" value="1"/>
</dbReference>
<dbReference type="PANTHER" id="PTHR10426">
    <property type="entry name" value="STRICTOSIDINE SYNTHASE-RELATED"/>
    <property type="match status" value="1"/>
</dbReference>
<dbReference type="Pfam" id="PF20067">
    <property type="entry name" value="SSL_N"/>
    <property type="match status" value="1"/>
</dbReference>
<dbReference type="Pfam" id="PF03088">
    <property type="entry name" value="Str_synth"/>
    <property type="match status" value="1"/>
</dbReference>
<dbReference type="SUPFAM" id="SSF63829">
    <property type="entry name" value="Calcium-dependent phosphotriesterase"/>
    <property type="match status" value="1"/>
</dbReference>
<gene>
    <name type="primary">APMAP</name>
    <name type="synonym">C20orf3</name>
    <name type="ORF">UNQ1869/PRO4305</name>
</gene>
<accession>Q9HDC9</accession>
<accession>A8K514</accession>
<accession>B4DXG1</accession>
<accession>Q6UVZ8</accession>
<accession>Q9GZS8</accession>
<accession>Q9NUB2</accession>
<comment type="function">
    <text evidence="5">Exhibits strong arylesterase activity with beta-naphthyl acetate and phenyl acetate. May play a role in adipocyte differentiation.</text>
</comment>
<comment type="interaction">
    <interactant intactId="EBI-723950">
        <id>Q9HDC9</id>
    </interactant>
    <interactant intactId="EBI-18304435">
        <id>Q5JX71</id>
        <label>FAM209A</label>
    </interactant>
    <organismsDiffer>false</organismsDiffer>
    <experiments>3</experiments>
</comment>
<comment type="subcellular location">
    <subcellularLocation>
        <location evidence="5">Membrane</location>
        <topology evidence="5">Single-pass type II membrane protein</topology>
    </subcellularLocation>
</comment>
<comment type="alternative products">
    <event type="alternative splicing"/>
    <isoform>
        <id>Q9HDC9-1</id>
        <name>1</name>
        <sequence type="displayed"/>
    </isoform>
    <isoform>
        <id>Q9HDC9-2</id>
        <name>2</name>
        <sequence type="described" ref="VSP_036992 VSP_036993"/>
    </isoform>
</comment>
<comment type="tissue specificity">
    <text evidence="5">Liver, glomerular and tubular structures of the kidney, endothelial cells, arterial wall and pancreatic islets of Langerhans (at protein level). Found ubiquitously in adult as well as in embryonic tissues. In adult tissue, the highest expression is found in the liver, placenta and heart. Found on the cell surface of monocytes. In embryonic tissue, the highest expression levels is found in the liver and the kidney.</text>
</comment>
<comment type="similarity">
    <text evidence="8">Belongs to the strictosidine synthase family.</text>
</comment>
<comment type="sequence caution" evidence="8">
    <conflict type="erroneous initiation">
        <sequence resource="EMBL-CDS" id="AAQ89435"/>
    </conflict>
</comment>
<comment type="sequence caution" evidence="8">
    <conflict type="erroneous initiation">
        <sequence resource="EMBL-CDS" id="BAB11885"/>
    </conflict>
</comment>
<comment type="sequence caution" evidence="8">
    <conflict type="erroneous initiation">
        <sequence resource="EMBL-CDS" id="BAB15253"/>
    </conflict>
</comment>
<comment type="sequence caution" evidence="8">
    <conflict type="erroneous initiation">
        <sequence resource="EMBL-CDS" id="BAB15578"/>
    </conflict>
</comment>
<reference key="1">
    <citation type="journal article" date="2000" name="Genomics">
        <title>Genomic construct and mapping of the gene for CMAP (leukocystatin/cystatin F, CST7) and identification of a proximal novel gene, BSCv (C20orf3).</title>
        <authorList>
            <person name="Morita M."/>
            <person name="Hara Y."/>
            <person name="Tamai Y."/>
            <person name="Arakawa H."/>
            <person name="Nishimura S."/>
        </authorList>
    </citation>
    <scope>NUCLEOTIDE SEQUENCE [MRNA] (ISOFORM 1)</scope>
</reference>
<reference key="2">
    <citation type="journal article" date="2004" name="Nat. Genet.">
        <title>Complete sequencing and characterization of 21,243 full-length human cDNAs.</title>
        <authorList>
            <person name="Ota T."/>
            <person name="Suzuki Y."/>
            <person name="Nishikawa T."/>
            <person name="Otsuki T."/>
            <person name="Sugiyama T."/>
            <person name="Irie R."/>
            <person name="Wakamatsu A."/>
            <person name="Hayashi K."/>
            <person name="Sato H."/>
            <person name="Nagai K."/>
            <person name="Kimura K."/>
            <person name="Makita H."/>
            <person name="Sekine M."/>
            <person name="Obayashi M."/>
            <person name="Nishi T."/>
            <person name="Shibahara T."/>
            <person name="Tanaka T."/>
            <person name="Ishii S."/>
            <person name="Yamamoto J."/>
            <person name="Saito K."/>
            <person name="Kawai Y."/>
            <person name="Isono Y."/>
            <person name="Nakamura Y."/>
            <person name="Nagahari K."/>
            <person name="Murakami K."/>
            <person name="Yasuda T."/>
            <person name="Iwayanagi T."/>
            <person name="Wagatsuma M."/>
            <person name="Shiratori A."/>
            <person name="Sudo H."/>
            <person name="Hosoiri T."/>
            <person name="Kaku Y."/>
            <person name="Kodaira H."/>
            <person name="Kondo H."/>
            <person name="Sugawara M."/>
            <person name="Takahashi M."/>
            <person name="Kanda K."/>
            <person name="Yokoi T."/>
            <person name="Furuya T."/>
            <person name="Kikkawa E."/>
            <person name="Omura Y."/>
            <person name="Abe K."/>
            <person name="Kamihara K."/>
            <person name="Katsuta N."/>
            <person name="Sato K."/>
            <person name="Tanikawa M."/>
            <person name="Yamazaki M."/>
            <person name="Ninomiya K."/>
            <person name="Ishibashi T."/>
            <person name="Yamashita H."/>
            <person name="Murakawa K."/>
            <person name="Fujimori K."/>
            <person name="Tanai H."/>
            <person name="Kimata M."/>
            <person name="Watanabe M."/>
            <person name="Hiraoka S."/>
            <person name="Chiba Y."/>
            <person name="Ishida S."/>
            <person name="Ono Y."/>
            <person name="Takiguchi S."/>
            <person name="Watanabe S."/>
            <person name="Yosida M."/>
            <person name="Hotuta T."/>
            <person name="Kusano J."/>
            <person name="Kanehori K."/>
            <person name="Takahashi-Fujii A."/>
            <person name="Hara H."/>
            <person name="Tanase T.-O."/>
            <person name="Nomura Y."/>
            <person name="Togiya S."/>
            <person name="Komai F."/>
            <person name="Hara R."/>
            <person name="Takeuchi K."/>
            <person name="Arita M."/>
            <person name="Imose N."/>
            <person name="Musashino K."/>
            <person name="Yuuki H."/>
            <person name="Oshima A."/>
            <person name="Sasaki N."/>
            <person name="Aotsuka S."/>
            <person name="Yoshikawa Y."/>
            <person name="Matsunawa H."/>
            <person name="Ichihara T."/>
            <person name="Shiohata N."/>
            <person name="Sano S."/>
            <person name="Moriya S."/>
            <person name="Momiyama H."/>
            <person name="Satoh N."/>
            <person name="Takami S."/>
            <person name="Terashima Y."/>
            <person name="Suzuki O."/>
            <person name="Nakagawa S."/>
            <person name="Senoh A."/>
            <person name="Mizoguchi H."/>
            <person name="Goto Y."/>
            <person name="Shimizu F."/>
            <person name="Wakebe H."/>
            <person name="Hishigaki H."/>
            <person name="Watanabe T."/>
            <person name="Sugiyama A."/>
            <person name="Takemoto M."/>
            <person name="Kawakami B."/>
            <person name="Yamazaki M."/>
            <person name="Watanabe K."/>
            <person name="Kumagai A."/>
            <person name="Itakura S."/>
            <person name="Fukuzumi Y."/>
            <person name="Fujimori Y."/>
            <person name="Komiyama M."/>
            <person name="Tashiro H."/>
            <person name="Tanigami A."/>
            <person name="Fujiwara T."/>
            <person name="Ono T."/>
            <person name="Yamada K."/>
            <person name="Fujii Y."/>
            <person name="Ozaki K."/>
            <person name="Hirao M."/>
            <person name="Ohmori Y."/>
            <person name="Kawabata A."/>
            <person name="Hikiji T."/>
            <person name="Kobatake N."/>
            <person name="Inagaki H."/>
            <person name="Ikema Y."/>
            <person name="Okamoto S."/>
            <person name="Okitani R."/>
            <person name="Kawakami T."/>
            <person name="Noguchi S."/>
            <person name="Itoh T."/>
            <person name="Shigeta K."/>
            <person name="Senba T."/>
            <person name="Matsumura K."/>
            <person name="Nakajima Y."/>
            <person name="Mizuno T."/>
            <person name="Morinaga M."/>
            <person name="Sasaki M."/>
            <person name="Togashi T."/>
            <person name="Oyama M."/>
            <person name="Hata H."/>
            <person name="Watanabe M."/>
            <person name="Komatsu T."/>
            <person name="Mizushima-Sugano J."/>
            <person name="Satoh T."/>
            <person name="Shirai Y."/>
            <person name="Takahashi Y."/>
            <person name="Nakagawa K."/>
            <person name="Okumura K."/>
            <person name="Nagase T."/>
            <person name="Nomura N."/>
            <person name="Kikuchi H."/>
            <person name="Masuho Y."/>
            <person name="Yamashita R."/>
            <person name="Nakai K."/>
            <person name="Yada T."/>
            <person name="Nakamura Y."/>
            <person name="Ohara O."/>
            <person name="Isogai T."/>
            <person name="Sugano S."/>
        </authorList>
    </citation>
    <scope>NUCLEOTIDE SEQUENCE [LARGE SCALE MRNA] (ISOFORMS 1 AND 2)</scope>
    <source>
        <tissue>Adipose tissue</tissue>
        <tissue>Testis</tissue>
    </source>
</reference>
<reference key="3">
    <citation type="journal article" date="2001" name="Nature">
        <title>The DNA sequence and comparative analysis of human chromosome 20.</title>
        <authorList>
            <person name="Deloukas P."/>
            <person name="Matthews L.H."/>
            <person name="Ashurst J.L."/>
            <person name="Burton J."/>
            <person name="Gilbert J.G.R."/>
            <person name="Jones M."/>
            <person name="Stavrides G."/>
            <person name="Almeida J.P."/>
            <person name="Babbage A.K."/>
            <person name="Bagguley C.L."/>
            <person name="Bailey J."/>
            <person name="Barlow K.F."/>
            <person name="Bates K.N."/>
            <person name="Beard L.M."/>
            <person name="Beare D.M."/>
            <person name="Beasley O.P."/>
            <person name="Bird C.P."/>
            <person name="Blakey S.E."/>
            <person name="Bridgeman A.M."/>
            <person name="Brown A.J."/>
            <person name="Buck D."/>
            <person name="Burrill W.D."/>
            <person name="Butler A.P."/>
            <person name="Carder C."/>
            <person name="Carter N.P."/>
            <person name="Chapman J.C."/>
            <person name="Clamp M."/>
            <person name="Clark G."/>
            <person name="Clark L.N."/>
            <person name="Clark S.Y."/>
            <person name="Clee C.M."/>
            <person name="Clegg S."/>
            <person name="Cobley V.E."/>
            <person name="Collier R.E."/>
            <person name="Connor R.E."/>
            <person name="Corby N.R."/>
            <person name="Coulson A."/>
            <person name="Coville G.J."/>
            <person name="Deadman R."/>
            <person name="Dhami P.D."/>
            <person name="Dunn M."/>
            <person name="Ellington A.G."/>
            <person name="Frankland J.A."/>
            <person name="Fraser A."/>
            <person name="French L."/>
            <person name="Garner P."/>
            <person name="Grafham D.V."/>
            <person name="Griffiths C."/>
            <person name="Griffiths M.N.D."/>
            <person name="Gwilliam R."/>
            <person name="Hall R.E."/>
            <person name="Hammond S."/>
            <person name="Harley J.L."/>
            <person name="Heath P.D."/>
            <person name="Ho S."/>
            <person name="Holden J.L."/>
            <person name="Howden P.J."/>
            <person name="Huckle E."/>
            <person name="Hunt A.R."/>
            <person name="Hunt S.E."/>
            <person name="Jekosch K."/>
            <person name="Johnson C.M."/>
            <person name="Johnson D."/>
            <person name="Kay M.P."/>
            <person name="Kimberley A.M."/>
            <person name="King A."/>
            <person name="Knights A."/>
            <person name="Laird G.K."/>
            <person name="Lawlor S."/>
            <person name="Lehvaeslaiho M.H."/>
            <person name="Leversha M.A."/>
            <person name="Lloyd C."/>
            <person name="Lloyd D.M."/>
            <person name="Lovell J.D."/>
            <person name="Marsh V.L."/>
            <person name="Martin S.L."/>
            <person name="McConnachie L.J."/>
            <person name="McLay K."/>
            <person name="McMurray A.A."/>
            <person name="Milne S.A."/>
            <person name="Mistry D."/>
            <person name="Moore M.J.F."/>
            <person name="Mullikin J.C."/>
            <person name="Nickerson T."/>
            <person name="Oliver K."/>
            <person name="Parker A."/>
            <person name="Patel R."/>
            <person name="Pearce T.A.V."/>
            <person name="Peck A.I."/>
            <person name="Phillimore B.J.C.T."/>
            <person name="Prathalingam S.R."/>
            <person name="Plumb R.W."/>
            <person name="Ramsay H."/>
            <person name="Rice C.M."/>
            <person name="Ross M.T."/>
            <person name="Scott C.E."/>
            <person name="Sehra H.K."/>
            <person name="Shownkeen R."/>
            <person name="Sims S."/>
            <person name="Skuce C.D."/>
            <person name="Smith M.L."/>
            <person name="Soderlund C."/>
            <person name="Steward C.A."/>
            <person name="Sulston J.E."/>
            <person name="Swann R.M."/>
            <person name="Sycamore N."/>
            <person name="Taylor R."/>
            <person name="Tee L."/>
            <person name="Thomas D.W."/>
            <person name="Thorpe A."/>
            <person name="Tracey A."/>
            <person name="Tromans A.C."/>
            <person name="Vaudin M."/>
            <person name="Wall M."/>
            <person name="Wallis J.M."/>
            <person name="Whitehead S.L."/>
            <person name="Whittaker P."/>
            <person name="Willey D.L."/>
            <person name="Williams L."/>
            <person name="Williams S.A."/>
            <person name="Wilming L."/>
            <person name="Wray P.W."/>
            <person name="Hubbard T."/>
            <person name="Durbin R.M."/>
            <person name="Bentley D.R."/>
            <person name="Beck S."/>
            <person name="Rogers J."/>
        </authorList>
    </citation>
    <scope>NUCLEOTIDE SEQUENCE [LARGE SCALE GENOMIC DNA]</scope>
</reference>
<reference key="4">
    <citation type="journal article" date="2004" name="Genome Res.">
        <title>The status, quality, and expansion of the NIH full-length cDNA project: the Mammalian Gene Collection (MGC).</title>
        <authorList>
            <consortium name="The MGC Project Team"/>
        </authorList>
    </citation>
    <scope>NUCLEOTIDE SEQUENCE [LARGE SCALE MRNA] (ISOFORM 1)</scope>
    <source>
        <tissue>Muscle</tissue>
    </source>
</reference>
<reference key="5">
    <citation type="journal article" date="2003" name="Genome Res.">
        <title>The secreted protein discovery initiative (SPDI), a large-scale effort to identify novel human secreted and transmembrane proteins: a bioinformatics assessment.</title>
        <authorList>
            <person name="Clark H.F."/>
            <person name="Gurney A.L."/>
            <person name="Abaya E."/>
            <person name="Baker K."/>
            <person name="Baldwin D.T."/>
            <person name="Brush J."/>
            <person name="Chen J."/>
            <person name="Chow B."/>
            <person name="Chui C."/>
            <person name="Crowley C."/>
            <person name="Currell B."/>
            <person name="Deuel B."/>
            <person name="Dowd P."/>
            <person name="Eaton D."/>
            <person name="Foster J.S."/>
            <person name="Grimaldi C."/>
            <person name="Gu Q."/>
            <person name="Hass P.E."/>
            <person name="Heldens S."/>
            <person name="Huang A."/>
            <person name="Kim H.S."/>
            <person name="Klimowski L."/>
            <person name="Jin Y."/>
            <person name="Johnson S."/>
            <person name="Lee J."/>
            <person name="Lewis L."/>
            <person name="Liao D."/>
            <person name="Mark M.R."/>
            <person name="Robbie E."/>
            <person name="Sanchez C."/>
            <person name="Schoenfeld J."/>
            <person name="Seshagiri S."/>
            <person name="Simmons L."/>
            <person name="Singh J."/>
            <person name="Smith V."/>
            <person name="Stinson J."/>
            <person name="Vagts A."/>
            <person name="Vandlen R.L."/>
            <person name="Watanabe C."/>
            <person name="Wieand D."/>
            <person name="Woods K."/>
            <person name="Xie M.-H."/>
            <person name="Yansura D.G."/>
            <person name="Yi S."/>
            <person name="Yu G."/>
            <person name="Yuan J."/>
            <person name="Zhang M."/>
            <person name="Zhang Z."/>
            <person name="Goddard A.D."/>
            <person name="Wood W.I."/>
            <person name="Godowski P.J."/>
            <person name="Gray A.M."/>
        </authorList>
    </citation>
    <scope>NUCLEOTIDE SEQUENCE [LARGE SCALE MRNA] OF 39-416 (ISOFORM 1)</scope>
</reference>
<reference key="6">
    <citation type="journal article" date="2003" name="Nat. Biotechnol.">
        <title>Identification and quantification of N-linked glycoproteins using hydrazide chemistry, stable isotope labeling and mass spectrometry.</title>
        <authorList>
            <person name="Zhang H."/>
            <person name="Li X.-J."/>
            <person name="Martin D.B."/>
            <person name="Aebersold R."/>
        </authorList>
    </citation>
    <scope>GLYCOSYLATION AT ASN-160 AND ASN-196</scope>
</reference>
<reference key="7">
    <citation type="journal article" date="2005" name="J. Proteome Res.">
        <title>Human plasma N-glycoproteome analysis by immunoaffinity subtraction, hydrazide chemistry, and mass spectrometry.</title>
        <authorList>
            <person name="Liu T."/>
            <person name="Qian W.-J."/>
            <person name="Gritsenko M.A."/>
            <person name="Camp D.G. II"/>
            <person name="Monroe M.E."/>
            <person name="Moore R.J."/>
            <person name="Smith R.D."/>
        </authorList>
    </citation>
    <scope>GLYCOSYLATION [LARGE SCALE ANALYSIS] AT ASN-160 AND ASN-196</scope>
    <source>
        <tissue>Plasma</tissue>
    </source>
</reference>
<reference key="8">
    <citation type="journal article" date="2008" name="Biochem. J.">
        <title>Localization and characterization of the novel protein encoded by C20orf3.</title>
        <authorList>
            <person name="Ilhan A."/>
            <person name="Gartner W."/>
            <person name="Nabokikh A."/>
            <person name="Daneva T."/>
            <person name="Majdic O."/>
            <person name="Cohen G."/>
            <person name="Boehmig G.A."/>
            <person name="Base W."/>
            <person name="Hoerl W.H."/>
            <person name="Wagner L."/>
        </authorList>
    </citation>
    <scope>FUNCTION</scope>
    <scope>SUBCELLULAR LOCATION</scope>
    <scope>TISSUE SPECIFICITY</scope>
    <scope>VARIANTS GLN-282 AND TRP-374</scope>
</reference>
<reference key="9">
    <citation type="journal article" date="2009" name="J. Proteome Res.">
        <title>Glycoproteomics analysis of human liver tissue by combination of multiple enzyme digestion and hydrazide chemistry.</title>
        <authorList>
            <person name="Chen R."/>
            <person name="Jiang X."/>
            <person name="Sun D."/>
            <person name="Han G."/>
            <person name="Wang F."/>
            <person name="Ye M."/>
            <person name="Wang L."/>
            <person name="Zou H."/>
        </authorList>
    </citation>
    <scope>GLYCOSYLATION [LARGE SCALE ANALYSIS] AT ASN-160 AND ASN-196</scope>
    <source>
        <tissue>Liver</tissue>
    </source>
</reference>
<reference key="10">
    <citation type="journal article" date="2011" name="BMC Syst. Biol.">
        <title>Initial characterization of the human central proteome.</title>
        <authorList>
            <person name="Burkard T.R."/>
            <person name="Planyavsky M."/>
            <person name="Kaupe I."/>
            <person name="Breitwieser F.P."/>
            <person name="Buerckstuemmer T."/>
            <person name="Bennett K.L."/>
            <person name="Superti-Furga G."/>
            <person name="Colinge J."/>
        </authorList>
    </citation>
    <scope>IDENTIFICATION BY MASS SPECTROMETRY [LARGE SCALE ANALYSIS]</scope>
</reference>
<reference key="11">
    <citation type="journal article" date="2012" name="Proc. Natl. Acad. Sci. U.S.A.">
        <title>N-terminal acetylome analyses and functional insights of the N-terminal acetyltransferase NatB.</title>
        <authorList>
            <person name="Van Damme P."/>
            <person name="Lasa M."/>
            <person name="Polevoda B."/>
            <person name="Gazquez C."/>
            <person name="Elosegui-Artola A."/>
            <person name="Kim D.S."/>
            <person name="De Juan-Pardo E."/>
            <person name="Demeyer K."/>
            <person name="Hole K."/>
            <person name="Larrea E."/>
            <person name="Timmerman E."/>
            <person name="Prieto J."/>
            <person name="Arnesen T."/>
            <person name="Sherman F."/>
            <person name="Gevaert K."/>
            <person name="Aldabe R."/>
        </authorList>
    </citation>
    <scope>ACETYLATION [LARGE SCALE ANALYSIS] AT SER-2</scope>
    <scope>CLEAVAGE OF INITIATOR METHIONINE [LARGE SCALE ANALYSIS]</scope>
    <scope>IDENTIFICATION BY MASS SPECTROMETRY [LARGE SCALE ANALYSIS]</scope>
</reference>
<reference key="12">
    <citation type="journal article" date="2013" name="J. Proteome Res.">
        <title>Toward a comprehensive characterization of a human cancer cell phosphoproteome.</title>
        <authorList>
            <person name="Zhou H."/>
            <person name="Di Palma S."/>
            <person name="Preisinger C."/>
            <person name="Peng M."/>
            <person name="Polat A.N."/>
            <person name="Heck A.J."/>
            <person name="Mohammed S."/>
        </authorList>
    </citation>
    <scope>PHOSPHORYLATION [LARGE SCALE ANALYSIS] AT THR-19</scope>
    <scope>IDENTIFICATION BY MASS SPECTROMETRY [LARGE SCALE ANALYSIS]</scope>
    <source>
        <tissue>Cervix carcinoma</tissue>
    </source>
</reference>
<reference key="13">
    <citation type="journal article" date="2014" name="J. Proteomics">
        <title>An enzyme assisted RP-RPLC approach for in-depth analysis of human liver phosphoproteome.</title>
        <authorList>
            <person name="Bian Y."/>
            <person name="Song C."/>
            <person name="Cheng K."/>
            <person name="Dong M."/>
            <person name="Wang F."/>
            <person name="Huang J."/>
            <person name="Sun D."/>
            <person name="Wang L."/>
            <person name="Ye M."/>
            <person name="Zou H."/>
        </authorList>
    </citation>
    <scope>PHOSPHORYLATION [LARGE SCALE ANALYSIS] AT THR-19</scope>
    <scope>IDENTIFICATION BY MASS SPECTROMETRY [LARGE SCALE ANALYSIS]</scope>
    <source>
        <tissue>Liver</tissue>
    </source>
</reference>
<reference key="14">
    <citation type="journal article" date="2015" name="Proteomics">
        <title>N-terminome analysis of the human mitochondrial proteome.</title>
        <authorList>
            <person name="Vaca Jacome A.S."/>
            <person name="Rabilloud T."/>
            <person name="Schaeffer-Reiss C."/>
            <person name="Rompais M."/>
            <person name="Ayoub D."/>
            <person name="Lane L."/>
            <person name="Bairoch A."/>
            <person name="Van Dorsselaer A."/>
            <person name="Carapito C."/>
        </authorList>
    </citation>
    <scope>IDENTIFICATION BY MASS SPECTROMETRY [LARGE SCALE ANALYSIS]</scope>
</reference>
<organism>
    <name type="scientific">Homo sapiens</name>
    <name type="common">Human</name>
    <dbReference type="NCBI Taxonomy" id="9606"/>
    <lineage>
        <taxon>Eukaryota</taxon>
        <taxon>Metazoa</taxon>
        <taxon>Chordata</taxon>
        <taxon>Craniata</taxon>
        <taxon>Vertebrata</taxon>
        <taxon>Euteleostomi</taxon>
        <taxon>Mammalia</taxon>
        <taxon>Eutheria</taxon>
        <taxon>Euarchontoglires</taxon>
        <taxon>Primates</taxon>
        <taxon>Haplorrhini</taxon>
        <taxon>Catarrhini</taxon>
        <taxon>Hominidae</taxon>
        <taxon>Homo</taxon>
    </lineage>
</organism>
<proteinExistence type="evidence at protein level"/>
<protein>
    <recommendedName>
        <fullName>Adipocyte plasma membrane-associated protein</fullName>
    </recommendedName>
    <alternativeName>
        <fullName>Protein BSCv</fullName>
    </alternativeName>
</protein>
<sequence length="416" mass="46480">MSEADGLRQRRPLRPQVVTDDDGQAPEAKDGSSFSGRVFRVTFLMLAVSLTVPLLGAMMLLESPIDPQPLSFKEPPLLLGVLHPNTKLRQAERLFENQLVGPESIAHIGDVMFTGTADGRVVKLENGEIETIARFGSGPCKTRDDEPVCGRPLGIRAGPNGTLFVADAYKGLFEVNPWKREVKLLLSSETPIEGKNMSFVNDLTVTQDGRKIYFTDSSSKWQRRDYLLLVMEGTDDGRLLEYDTVTREVKVLLDQLRFPNGVQLSPAEDFVLVAETTMARIRRVYVSGLMKGGADLFVENMPGFPDNIRPSSSGGYWVGMSTIRPNPGFSMLDFLSERPWIKRMIFKLFSQETVMKFVPRYSLVLELSDSGAFRRSLHDPDGLVATYISEVHEHDGHLYLGSFRSPFLCRLSLQAV</sequence>
<keyword id="KW-0007">Acetylation</keyword>
<keyword id="KW-0025">Alternative splicing</keyword>
<keyword id="KW-0325">Glycoprotein</keyword>
<keyword id="KW-0472">Membrane</keyword>
<keyword id="KW-0597">Phosphoprotein</keyword>
<keyword id="KW-1267">Proteomics identification</keyword>
<keyword id="KW-1185">Reference proteome</keyword>
<keyword id="KW-0735">Signal-anchor</keyword>
<keyword id="KW-0812">Transmembrane</keyword>
<keyword id="KW-1133">Transmembrane helix</keyword>
<evidence type="ECO:0000255" key="1"/>
<evidence type="ECO:0000256" key="2">
    <source>
        <dbReference type="SAM" id="MobiDB-lite"/>
    </source>
</evidence>
<evidence type="ECO:0000269" key="3">
    <source>
    </source>
</evidence>
<evidence type="ECO:0000269" key="4">
    <source>
    </source>
</evidence>
<evidence type="ECO:0000269" key="5">
    <source>
    </source>
</evidence>
<evidence type="ECO:0000269" key="6">
    <source>
    </source>
</evidence>
<evidence type="ECO:0000303" key="7">
    <source>
    </source>
</evidence>
<evidence type="ECO:0000305" key="8"/>
<evidence type="ECO:0007744" key="9">
    <source>
    </source>
</evidence>
<evidence type="ECO:0007744" key="10">
    <source>
    </source>
</evidence>
<evidence type="ECO:0007744" key="11">
    <source>
    </source>
</evidence>
<name>APMAP_HUMAN</name>
<feature type="initiator methionine" description="Removed" evidence="9">
    <location>
        <position position="1"/>
    </location>
</feature>
<feature type="chain" id="PRO_0000205945" description="Adipocyte plasma membrane-associated protein">
    <location>
        <begin position="2"/>
        <end position="416"/>
    </location>
</feature>
<feature type="topological domain" description="Cytoplasmic" evidence="1">
    <location>
        <begin position="2"/>
        <end position="40"/>
    </location>
</feature>
<feature type="transmembrane region" description="Helical; Signal-anchor for type II membrane protein" evidence="1">
    <location>
        <begin position="41"/>
        <end position="61"/>
    </location>
</feature>
<feature type="topological domain" description="Extracellular" evidence="1">
    <location>
        <begin position="62"/>
        <end position="416"/>
    </location>
</feature>
<feature type="region of interest" description="Disordered" evidence="2">
    <location>
        <begin position="1"/>
        <end position="32"/>
    </location>
</feature>
<feature type="modified residue" description="N-acetylserine" evidence="9">
    <location>
        <position position="2"/>
    </location>
</feature>
<feature type="modified residue" description="Phosphothreonine" evidence="10 11">
    <location>
        <position position="19"/>
    </location>
</feature>
<feature type="glycosylation site" description="N-linked (GlcNAc...) asparagine" evidence="3 4 6">
    <location>
        <position position="160"/>
    </location>
</feature>
<feature type="glycosylation site" description="N-linked (GlcNAc...) asparagine" evidence="3 4 6">
    <location>
        <position position="196"/>
    </location>
</feature>
<feature type="splice variant" id="VSP_036992" description="In isoform 2." evidence="7">
    <original>RVYVSGL</original>
    <variation>SSLVKRR</variation>
    <location>
        <begin position="283"/>
        <end position="289"/>
    </location>
</feature>
<feature type="splice variant" id="VSP_036993" description="In isoform 2." evidence="7">
    <location>
        <begin position="290"/>
        <end position="416"/>
    </location>
</feature>
<feature type="sequence variant" id="VAR_014128" description="In dbSNP:rs12242.">
    <original>I</original>
    <variation>V</variation>
    <location>
        <position position="65"/>
    </location>
</feature>
<feature type="sequence variant" id="VAR_055039" description="In dbSNP:rs35097515." evidence="5">
    <original>R</original>
    <variation>Q</variation>
    <location>
        <position position="282"/>
    </location>
</feature>
<feature type="sequence variant" id="VAR_055040" description="In dbSNP:rs28364786." evidence="5">
    <original>R</original>
    <variation>W</variation>
    <location>
        <position position="374"/>
    </location>
</feature>
<feature type="sequence conflict" description="In Ref. 2; BAG63373." evidence="8" ref="2">
    <original>P</original>
    <variation>A</variation>
    <location>
        <position position="12"/>
    </location>
</feature>
<feature type="sequence conflict" description="In Ref. 2; BAF83818." evidence="8" ref="2">
    <original>E</original>
    <variation>G</variation>
    <location>
        <position position="74"/>
    </location>
</feature>
<feature type="sequence conflict" description="In Ref. 2; BAF83818." evidence="8" ref="2">
    <original>D</original>
    <variation>G</variation>
    <location>
        <position position="295"/>
    </location>
</feature>
<feature type="sequence conflict" description="In Ref. 2; BAF83818." evidence="8" ref="2">
    <original>V</original>
    <variation>A</variation>
    <location>
        <position position="416"/>
    </location>
</feature>